<name>DNAJ_RHILW</name>
<feature type="chain" id="PRO_1000137716" description="Chaperone protein DnaJ">
    <location>
        <begin position="1"/>
        <end position="376"/>
    </location>
</feature>
<feature type="domain" description="J" evidence="1">
    <location>
        <begin position="5"/>
        <end position="70"/>
    </location>
</feature>
<feature type="repeat" description="CXXCXGXG motif">
    <location>
        <begin position="150"/>
        <end position="157"/>
    </location>
</feature>
<feature type="repeat" description="CXXCXGXG motif">
    <location>
        <begin position="167"/>
        <end position="174"/>
    </location>
</feature>
<feature type="repeat" description="CXXCXGXG motif">
    <location>
        <begin position="189"/>
        <end position="196"/>
    </location>
</feature>
<feature type="repeat" description="CXXCXGXG motif">
    <location>
        <begin position="203"/>
        <end position="210"/>
    </location>
</feature>
<feature type="zinc finger region" description="CR-type" evidence="1">
    <location>
        <begin position="137"/>
        <end position="215"/>
    </location>
</feature>
<feature type="binding site" evidence="1">
    <location>
        <position position="150"/>
    </location>
    <ligand>
        <name>Zn(2+)</name>
        <dbReference type="ChEBI" id="CHEBI:29105"/>
        <label>1</label>
    </ligand>
</feature>
<feature type="binding site" evidence="1">
    <location>
        <position position="153"/>
    </location>
    <ligand>
        <name>Zn(2+)</name>
        <dbReference type="ChEBI" id="CHEBI:29105"/>
        <label>1</label>
    </ligand>
</feature>
<feature type="binding site" evidence="1">
    <location>
        <position position="167"/>
    </location>
    <ligand>
        <name>Zn(2+)</name>
        <dbReference type="ChEBI" id="CHEBI:29105"/>
        <label>2</label>
    </ligand>
</feature>
<feature type="binding site" evidence="1">
    <location>
        <position position="170"/>
    </location>
    <ligand>
        <name>Zn(2+)</name>
        <dbReference type="ChEBI" id="CHEBI:29105"/>
        <label>2</label>
    </ligand>
</feature>
<feature type="binding site" evidence="1">
    <location>
        <position position="189"/>
    </location>
    <ligand>
        <name>Zn(2+)</name>
        <dbReference type="ChEBI" id="CHEBI:29105"/>
        <label>2</label>
    </ligand>
</feature>
<feature type="binding site" evidence="1">
    <location>
        <position position="192"/>
    </location>
    <ligand>
        <name>Zn(2+)</name>
        <dbReference type="ChEBI" id="CHEBI:29105"/>
        <label>2</label>
    </ligand>
</feature>
<feature type="binding site" evidence="1">
    <location>
        <position position="203"/>
    </location>
    <ligand>
        <name>Zn(2+)</name>
        <dbReference type="ChEBI" id="CHEBI:29105"/>
        <label>1</label>
    </ligand>
</feature>
<feature type="binding site" evidence="1">
    <location>
        <position position="206"/>
    </location>
    <ligand>
        <name>Zn(2+)</name>
        <dbReference type="ChEBI" id="CHEBI:29105"/>
        <label>1</label>
    </ligand>
</feature>
<dbReference type="EMBL" id="CP001191">
    <property type="protein sequence ID" value="ACI57357.1"/>
    <property type="molecule type" value="Genomic_DNA"/>
</dbReference>
<dbReference type="RefSeq" id="WP_012559503.1">
    <property type="nucleotide sequence ID" value="NC_011369.1"/>
</dbReference>
<dbReference type="SMR" id="B5ZWQ1"/>
<dbReference type="STRING" id="395492.Rleg2_4095"/>
<dbReference type="KEGG" id="rlt:Rleg2_4095"/>
<dbReference type="eggNOG" id="COG0484">
    <property type="taxonomic scope" value="Bacteria"/>
</dbReference>
<dbReference type="HOGENOM" id="CLU_017633_0_7_5"/>
<dbReference type="Proteomes" id="UP000008330">
    <property type="component" value="Chromosome"/>
</dbReference>
<dbReference type="GO" id="GO:0005737">
    <property type="term" value="C:cytoplasm"/>
    <property type="evidence" value="ECO:0007669"/>
    <property type="project" value="UniProtKB-SubCell"/>
</dbReference>
<dbReference type="GO" id="GO:0005524">
    <property type="term" value="F:ATP binding"/>
    <property type="evidence" value="ECO:0007669"/>
    <property type="project" value="InterPro"/>
</dbReference>
<dbReference type="GO" id="GO:0031072">
    <property type="term" value="F:heat shock protein binding"/>
    <property type="evidence" value="ECO:0007669"/>
    <property type="project" value="InterPro"/>
</dbReference>
<dbReference type="GO" id="GO:0051082">
    <property type="term" value="F:unfolded protein binding"/>
    <property type="evidence" value="ECO:0007669"/>
    <property type="project" value="UniProtKB-UniRule"/>
</dbReference>
<dbReference type="GO" id="GO:0008270">
    <property type="term" value="F:zinc ion binding"/>
    <property type="evidence" value="ECO:0007669"/>
    <property type="project" value="UniProtKB-UniRule"/>
</dbReference>
<dbReference type="GO" id="GO:0051085">
    <property type="term" value="P:chaperone cofactor-dependent protein refolding"/>
    <property type="evidence" value="ECO:0007669"/>
    <property type="project" value="TreeGrafter"/>
</dbReference>
<dbReference type="GO" id="GO:0006260">
    <property type="term" value="P:DNA replication"/>
    <property type="evidence" value="ECO:0007669"/>
    <property type="project" value="UniProtKB-KW"/>
</dbReference>
<dbReference type="GO" id="GO:0042026">
    <property type="term" value="P:protein refolding"/>
    <property type="evidence" value="ECO:0007669"/>
    <property type="project" value="TreeGrafter"/>
</dbReference>
<dbReference type="GO" id="GO:0009408">
    <property type="term" value="P:response to heat"/>
    <property type="evidence" value="ECO:0007669"/>
    <property type="project" value="InterPro"/>
</dbReference>
<dbReference type="CDD" id="cd06257">
    <property type="entry name" value="DnaJ"/>
    <property type="match status" value="1"/>
</dbReference>
<dbReference type="CDD" id="cd10747">
    <property type="entry name" value="DnaJ_C"/>
    <property type="match status" value="1"/>
</dbReference>
<dbReference type="CDD" id="cd10719">
    <property type="entry name" value="DnaJ_zf"/>
    <property type="match status" value="1"/>
</dbReference>
<dbReference type="FunFam" id="1.10.287.110:FF:000034">
    <property type="entry name" value="Chaperone protein DnaJ"/>
    <property type="match status" value="1"/>
</dbReference>
<dbReference type="FunFam" id="2.10.230.10:FF:000002">
    <property type="entry name" value="Molecular chaperone DnaJ"/>
    <property type="match status" value="1"/>
</dbReference>
<dbReference type="FunFam" id="2.60.260.20:FF:000004">
    <property type="entry name" value="Molecular chaperone DnaJ"/>
    <property type="match status" value="1"/>
</dbReference>
<dbReference type="Gene3D" id="1.10.287.110">
    <property type="entry name" value="DnaJ domain"/>
    <property type="match status" value="1"/>
</dbReference>
<dbReference type="Gene3D" id="2.10.230.10">
    <property type="entry name" value="Heat shock protein DnaJ, cysteine-rich domain"/>
    <property type="match status" value="1"/>
</dbReference>
<dbReference type="Gene3D" id="2.60.260.20">
    <property type="entry name" value="Urease metallochaperone UreE, N-terminal domain"/>
    <property type="match status" value="2"/>
</dbReference>
<dbReference type="HAMAP" id="MF_01152">
    <property type="entry name" value="DnaJ"/>
    <property type="match status" value="1"/>
</dbReference>
<dbReference type="InterPro" id="IPR012724">
    <property type="entry name" value="DnaJ"/>
</dbReference>
<dbReference type="InterPro" id="IPR002939">
    <property type="entry name" value="DnaJ_C"/>
</dbReference>
<dbReference type="InterPro" id="IPR001623">
    <property type="entry name" value="DnaJ_domain"/>
</dbReference>
<dbReference type="InterPro" id="IPR018253">
    <property type="entry name" value="DnaJ_domain_CS"/>
</dbReference>
<dbReference type="InterPro" id="IPR008971">
    <property type="entry name" value="HSP40/DnaJ_pept-bd"/>
</dbReference>
<dbReference type="InterPro" id="IPR001305">
    <property type="entry name" value="HSP_DnaJ_Cys-rich_dom"/>
</dbReference>
<dbReference type="InterPro" id="IPR036410">
    <property type="entry name" value="HSP_DnaJ_Cys-rich_dom_sf"/>
</dbReference>
<dbReference type="InterPro" id="IPR036869">
    <property type="entry name" value="J_dom_sf"/>
</dbReference>
<dbReference type="NCBIfam" id="TIGR02349">
    <property type="entry name" value="DnaJ_bact"/>
    <property type="match status" value="1"/>
</dbReference>
<dbReference type="NCBIfam" id="NF008035">
    <property type="entry name" value="PRK10767.1"/>
    <property type="match status" value="1"/>
</dbReference>
<dbReference type="PANTHER" id="PTHR43096:SF48">
    <property type="entry name" value="CHAPERONE PROTEIN DNAJ"/>
    <property type="match status" value="1"/>
</dbReference>
<dbReference type="PANTHER" id="PTHR43096">
    <property type="entry name" value="DNAJ HOMOLOG 1, MITOCHONDRIAL-RELATED"/>
    <property type="match status" value="1"/>
</dbReference>
<dbReference type="Pfam" id="PF00226">
    <property type="entry name" value="DnaJ"/>
    <property type="match status" value="1"/>
</dbReference>
<dbReference type="Pfam" id="PF01556">
    <property type="entry name" value="DnaJ_C"/>
    <property type="match status" value="1"/>
</dbReference>
<dbReference type="Pfam" id="PF00684">
    <property type="entry name" value="DnaJ_CXXCXGXG"/>
    <property type="match status" value="1"/>
</dbReference>
<dbReference type="PRINTS" id="PR00625">
    <property type="entry name" value="JDOMAIN"/>
</dbReference>
<dbReference type="SMART" id="SM00271">
    <property type="entry name" value="DnaJ"/>
    <property type="match status" value="1"/>
</dbReference>
<dbReference type="SUPFAM" id="SSF46565">
    <property type="entry name" value="Chaperone J-domain"/>
    <property type="match status" value="1"/>
</dbReference>
<dbReference type="SUPFAM" id="SSF57938">
    <property type="entry name" value="DnaJ/Hsp40 cysteine-rich domain"/>
    <property type="match status" value="1"/>
</dbReference>
<dbReference type="SUPFAM" id="SSF49493">
    <property type="entry name" value="HSP40/DnaJ peptide-binding domain"/>
    <property type="match status" value="2"/>
</dbReference>
<dbReference type="PROSITE" id="PS00636">
    <property type="entry name" value="DNAJ_1"/>
    <property type="match status" value="1"/>
</dbReference>
<dbReference type="PROSITE" id="PS50076">
    <property type="entry name" value="DNAJ_2"/>
    <property type="match status" value="1"/>
</dbReference>
<dbReference type="PROSITE" id="PS51188">
    <property type="entry name" value="ZF_CR"/>
    <property type="match status" value="1"/>
</dbReference>
<gene>
    <name evidence="1" type="primary">dnaJ</name>
    <name type="ordered locus">Rleg2_4095</name>
</gene>
<accession>B5ZWQ1</accession>
<organism>
    <name type="scientific">Rhizobium leguminosarum bv. trifolii (strain WSM2304)</name>
    <dbReference type="NCBI Taxonomy" id="395492"/>
    <lineage>
        <taxon>Bacteria</taxon>
        <taxon>Pseudomonadati</taxon>
        <taxon>Pseudomonadota</taxon>
        <taxon>Alphaproteobacteria</taxon>
        <taxon>Hyphomicrobiales</taxon>
        <taxon>Rhizobiaceae</taxon>
        <taxon>Rhizobium/Agrobacterium group</taxon>
        <taxon>Rhizobium</taxon>
    </lineage>
</organism>
<comment type="function">
    <text evidence="1">Participates actively in the response to hyperosmotic and heat shock by preventing the aggregation of stress-denatured proteins and by disaggregating proteins, also in an autonomous, DnaK-independent fashion. Unfolded proteins bind initially to DnaJ; upon interaction with the DnaJ-bound protein, DnaK hydrolyzes its bound ATP, resulting in the formation of a stable complex. GrpE releases ADP from DnaK; ATP binding to DnaK triggers the release of the substrate protein, thus completing the reaction cycle. Several rounds of ATP-dependent interactions between DnaJ, DnaK and GrpE are required for fully efficient folding. Also involved, together with DnaK and GrpE, in the DNA replication of plasmids through activation of initiation proteins.</text>
</comment>
<comment type="cofactor">
    <cofactor evidence="1">
        <name>Zn(2+)</name>
        <dbReference type="ChEBI" id="CHEBI:29105"/>
    </cofactor>
    <text evidence="1">Binds 2 Zn(2+) ions per monomer.</text>
</comment>
<comment type="subunit">
    <text evidence="1">Homodimer.</text>
</comment>
<comment type="subcellular location">
    <subcellularLocation>
        <location evidence="1">Cytoplasm</location>
    </subcellularLocation>
</comment>
<comment type="domain">
    <text evidence="1">The J domain is necessary and sufficient to stimulate DnaK ATPase activity. Zinc center 1 plays an important role in the autonomous, DnaK-independent chaperone activity of DnaJ. Zinc center 2 is essential for interaction with DnaK and for DnaJ activity.</text>
</comment>
<comment type="similarity">
    <text evidence="1">Belongs to the DnaJ family.</text>
</comment>
<protein>
    <recommendedName>
        <fullName evidence="1">Chaperone protein DnaJ</fullName>
    </recommendedName>
</protein>
<reference key="1">
    <citation type="journal article" date="2010" name="Stand. Genomic Sci.">
        <title>Complete genome sequence of Rhizobium leguminosarum bv trifolii strain WSM2304, an effective microsymbiont of the South American clover Trifolium polymorphum.</title>
        <authorList>
            <person name="Reeve W."/>
            <person name="O'Hara G."/>
            <person name="Chain P."/>
            <person name="Ardley J."/>
            <person name="Brau L."/>
            <person name="Nandesena K."/>
            <person name="Tiwari R."/>
            <person name="Malfatti S."/>
            <person name="Kiss H."/>
            <person name="Lapidus A."/>
            <person name="Copeland A."/>
            <person name="Nolan M."/>
            <person name="Land M."/>
            <person name="Ivanova N."/>
            <person name="Mavromatis K."/>
            <person name="Markowitz V."/>
            <person name="Kyrpides N."/>
            <person name="Melino V."/>
            <person name="Denton M."/>
            <person name="Yates R."/>
            <person name="Howieson J."/>
        </authorList>
    </citation>
    <scope>NUCLEOTIDE SEQUENCE [LARGE SCALE GENOMIC DNA]</scope>
    <source>
        <strain>WSM2304</strain>
    </source>
</reference>
<evidence type="ECO:0000255" key="1">
    <source>
        <dbReference type="HAMAP-Rule" id="MF_01152"/>
    </source>
</evidence>
<keyword id="KW-0143">Chaperone</keyword>
<keyword id="KW-0963">Cytoplasm</keyword>
<keyword id="KW-0235">DNA replication</keyword>
<keyword id="KW-0479">Metal-binding</keyword>
<keyword id="KW-1185">Reference proteome</keyword>
<keyword id="KW-0677">Repeat</keyword>
<keyword id="KW-0346">Stress response</keyword>
<keyword id="KW-0862">Zinc</keyword>
<keyword id="KW-0863">Zinc-finger</keyword>
<proteinExistence type="inferred from homology"/>
<sequence>MAKADFYETLGVAKTADEKELKSAFRKLAMKFHPDKNPDDKDAERKFKEINEAYEMLKDPQKRAAYDRYGHAAFEHGGMGGGGGGGFAGGGFSDIFEDIFGEMMGGGRARQRSSGGRERGADLRYNMEITLEEAFSGKTAQIRVPTSITCDVCSGSGAKPGTQPKNCGTCQGSGRVRAAQGFFSIERTCPTCHGRGQIIPDPCPKCHGQGRVTEERSLSVNIPAGIEDGTRIRLQGEGEAGARGGPAGDLYIFLSVKPHEFYQRDGADLYCAVPISMTTAALGGTFDVATLDGTKSRVSVPEGTQAGKQFRLKSKGMPVLRSAQTGDLYIQIQIETPQKLTKRQRELLQEFEQLSSKENNPESTGFFARMKEFFEG</sequence>